<accession>Q3ARV1</accession>
<feature type="chain" id="PRO_0000332326" description="Cobyric acid synthase">
    <location>
        <begin position="1"/>
        <end position="506"/>
    </location>
</feature>
<feature type="domain" description="GATase cobBQ-type" evidence="1">
    <location>
        <begin position="260"/>
        <end position="453"/>
    </location>
</feature>
<feature type="active site" description="Nucleophile" evidence="1">
    <location>
        <position position="341"/>
    </location>
</feature>
<feature type="active site" evidence="1">
    <location>
        <position position="445"/>
    </location>
</feature>
<organism>
    <name type="scientific">Chlorobium chlorochromatii (strain CaD3)</name>
    <dbReference type="NCBI Taxonomy" id="340177"/>
    <lineage>
        <taxon>Bacteria</taxon>
        <taxon>Pseudomonadati</taxon>
        <taxon>Chlorobiota</taxon>
        <taxon>Chlorobiia</taxon>
        <taxon>Chlorobiales</taxon>
        <taxon>Chlorobiaceae</taxon>
        <taxon>Chlorobium/Pelodictyon group</taxon>
        <taxon>Chlorobium</taxon>
    </lineage>
</organism>
<sequence>MVTPTKTYRSLAILGTASDVGKSIVATALCRIFRNAGIDVAPYKAQNMSNNSGVTPDGLEIGRAQIAQAEAACVVPTADMNPVLLKPNTDIGAQVVLQGRVCSNESAQGYFRDTSRWAEAARESLLRLKQKHELLVIEGAGSCAEMNLYPRDFVNFRTAREADAAVILVADIDRGGVFAQVVGTLAVIPPEDRALVKGVIINRFRGDSELFREGITMLEEMSGVPVLGVIPYFRHFAIDAEDAVPLSAKVDPAQEPETGKVGVAAIYFPHISNFTDLSPLEHDPSVTLHYLHHPKPLSAYKVLILPGSKNVRGDYAWLQQMGWEKEIRAFREAGGLVIGICGGYQMLGCSIADPYGVEGESGTTQTLGLLETETLLEQEKYLANSEGVLVGTSIKAFGYEIHNGRTTVGANCHPLMNIVARNNHPESDVDGVVSADGRVIGTYFHGIFNEPAVKQWFLQQADSTYTLQPHERGRQESYELLADHFRQHLDVNKLFELIDYEQSLLP</sequence>
<comment type="function">
    <text evidence="1">Catalyzes amidations at positions B, D, E, and G on adenosylcobyrinic A,C-diamide. NH(2) groups are provided by glutamine, and one molecule of ATP is hydrogenolyzed for each amidation.</text>
</comment>
<comment type="pathway">
    <text evidence="1">Cofactor biosynthesis; adenosylcobalamin biosynthesis.</text>
</comment>
<comment type="similarity">
    <text evidence="1">Belongs to the CobB/CobQ family. CobQ subfamily.</text>
</comment>
<reference key="1">
    <citation type="submission" date="2005-08" db="EMBL/GenBank/DDBJ databases">
        <title>Complete sequence of Chlorobium chlorochromatii CaD3.</title>
        <authorList>
            <consortium name="US DOE Joint Genome Institute"/>
            <person name="Copeland A."/>
            <person name="Lucas S."/>
            <person name="Lapidus A."/>
            <person name="Barry K."/>
            <person name="Detter J.C."/>
            <person name="Glavina T."/>
            <person name="Hammon N."/>
            <person name="Israni S."/>
            <person name="Pitluck S."/>
            <person name="Bryant D."/>
            <person name="Schmutz J."/>
            <person name="Larimer F."/>
            <person name="Land M."/>
            <person name="Kyrpides N."/>
            <person name="Ivanova N."/>
            <person name="Richardson P."/>
        </authorList>
    </citation>
    <scope>NUCLEOTIDE SEQUENCE [LARGE SCALE GENOMIC DNA]</scope>
    <source>
        <strain>CaD3</strain>
    </source>
</reference>
<protein>
    <recommendedName>
        <fullName evidence="1">Cobyric acid synthase</fullName>
    </recommendedName>
</protein>
<evidence type="ECO:0000255" key="1">
    <source>
        <dbReference type="HAMAP-Rule" id="MF_00028"/>
    </source>
</evidence>
<gene>
    <name evidence="1" type="primary">cobQ</name>
    <name type="ordered locus">Cag_1012</name>
</gene>
<proteinExistence type="inferred from homology"/>
<dbReference type="EMBL" id="CP000108">
    <property type="protein sequence ID" value="ABB28274.1"/>
    <property type="molecule type" value="Genomic_DNA"/>
</dbReference>
<dbReference type="SMR" id="Q3ARV1"/>
<dbReference type="STRING" id="340177.Cag_1012"/>
<dbReference type="KEGG" id="cch:Cag_1012"/>
<dbReference type="eggNOG" id="COG1492">
    <property type="taxonomic scope" value="Bacteria"/>
</dbReference>
<dbReference type="HOGENOM" id="CLU_019250_2_2_10"/>
<dbReference type="OrthoDB" id="9808302at2"/>
<dbReference type="UniPathway" id="UPA00148"/>
<dbReference type="GO" id="GO:0015420">
    <property type="term" value="F:ABC-type vitamin B12 transporter activity"/>
    <property type="evidence" value="ECO:0007669"/>
    <property type="project" value="UniProtKB-UniRule"/>
</dbReference>
<dbReference type="GO" id="GO:0003824">
    <property type="term" value="F:catalytic activity"/>
    <property type="evidence" value="ECO:0007669"/>
    <property type="project" value="InterPro"/>
</dbReference>
<dbReference type="GO" id="GO:0009236">
    <property type="term" value="P:cobalamin biosynthetic process"/>
    <property type="evidence" value="ECO:0007669"/>
    <property type="project" value="UniProtKB-UniRule"/>
</dbReference>
<dbReference type="CDD" id="cd05389">
    <property type="entry name" value="CobQ_N"/>
    <property type="match status" value="1"/>
</dbReference>
<dbReference type="CDD" id="cd01750">
    <property type="entry name" value="GATase1_CobQ"/>
    <property type="match status" value="1"/>
</dbReference>
<dbReference type="Gene3D" id="3.40.50.880">
    <property type="match status" value="1"/>
</dbReference>
<dbReference type="Gene3D" id="3.40.50.300">
    <property type="entry name" value="P-loop containing nucleotide triphosphate hydrolases"/>
    <property type="match status" value="1"/>
</dbReference>
<dbReference type="HAMAP" id="MF_00028">
    <property type="entry name" value="CobQ"/>
    <property type="match status" value="1"/>
</dbReference>
<dbReference type="InterPro" id="IPR029062">
    <property type="entry name" value="Class_I_gatase-like"/>
</dbReference>
<dbReference type="InterPro" id="IPR002586">
    <property type="entry name" value="CobQ/CobB/MinD/ParA_Nub-bd_dom"/>
</dbReference>
<dbReference type="InterPro" id="IPR033949">
    <property type="entry name" value="CobQ_GATase1"/>
</dbReference>
<dbReference type="InterPro" id="IPR047045">
    <property type="entry name" value="CobQ_N"/>
</dbReference>
<dbReference type="InterPro" id="IPR004459">
    <property type="entry name" value="CobQ_synth"/>
</dbReference>
<dbReference type="InterPro" id="IPR011698">
    <property type="entry name" value="GATase_3"/>
</dbReference>
<dbReference type="InterPro" id="IPR027417">
    <property type="entry name" value="P-loop_NTPase"/>
</dbReference>
<dbReference type="NCBIfam" id="TIGR00313">
    <property type="entry name" value="cobQ"/>
    <property type="match status" value="1"/>
</dbReference>
<dbReference type="NCBIfam" id="NF001989">
    <property type="entry name" value="PRK00784.1"/>
    <property type="match status" value="1"/>
</dbReference>
<dbReference type="PANTHER" id="PTHR21343:SF1">
    <property type="entry name" value="COBYRIC ACID SYNTHASE"/>
    <property type="match status" value="1"/>
</dbReference>
<dbReference type="PANTHER" id="PTHR21343">
    <property type="entry name" value="DETHIOBIOTIN SYNTHETASE"/>
    <property type="match status" value="1"/>
</dbReference>
<dbReference type="Pfam" id="PF01656">
    <property type="entry name" value="CbiA"/>
    <property type="match status" value="1"/>
</dbReference>
<dbReference type="Pfam" id="PF07685">
    <property type="entry name" value="GATase_3"/>
    <property type="match status" value="1"/>
</dbReference>
<dbReference type="SUPFAM" id="SSF52317">
    <property type="entry name" value="Class I glutamine amidotransferase-like"/>
    <property type="match status" value="1"/>
</dbReference>
<dbReference type="SUPFAM" id="SSF52540">
    <property type="entry name" value="P-loop containing nucleoside triphosphate hydrolases"/>
    <property type="match status" value="1"/>
</dbReference>
<dbReference type="PROSITE" id="PS51274">
    <property type="entry name" value="GATASE_COBBQ"/>
    <property type="match status" value="1"/>
</dbReference>
<keyword id="KW-0169">Cobalamin biosynthesis</keyword>
<keyword id="KW-0315">Glutamine amidotransferase</keyword>
<name>COBQ_CHLCH</name>